<accession>A8GLB8</accession>
<name>GPDA_SERP5</name>
<proteinExistence type="inferred from homology"/>
<dbReference type="EC" id="1.1.1.94" evidence="1"/>
<dbReference type="EMBL" id="CP000826">
    <property type="protein sequence ID" value="ABV43908.1"/>
    <property type="molecule type" value="Genomic_DNA"/>
</dbReference>
<dbReference type="SMR" id="A8GLB8"/>
<dbReference type="STRING" id="399741.Spro_4815"/>
<dbReference type="KEGG" id="spe:Spro_4815"/>
<dbReference type="eggNOG" id="COG0240">
    <property type="taxonomic scope" value="Bacteria"/>
</dbReference>
<dbReference type="HOGENOM" id="CLU_033449_0_2_6"/>
<dbReference type="OrthoDB" id="9812273at2"/>
<dbReference type="UniPathway" id="UPA00940"/>
<dbReference type="GO" id="GO:0005829">
    <property type="term" value="C:cytosol"/>
    <property type="evidence" value="ECO:0007669"/>
    <property type="project" value="TreeGrafter"/>
</dbReference>
<dbReference type="GO" id="GO:0047952">
    <property type="term" value="F:glycerol-3-phosphate dehydrogenase [NAD(P)+] activity"/>
    <property type="evidence" value="ECO:0007669"/>
    <property type="project" value="UniProtKB-UniRule"/>
</dbReference>
<dbReference type="GO" id="GO:0051287">
    <property type="term" value="F:NAD binding"/>
    <property type="evidence" value="ECO:0007669"/>
    <property type="project" value="InterPro"/>
</dbReference>
<dbReference type="GO" id="GO:0005975">
    <property type="term" value="P:carbohydrate metabolic process"/>
    <property type="evidence" value="ECO:0007669"/>
    <property type="project" value="InterPro"/>
</dbReference>
<dbReference type="GO" id="GO:0046167">
    <property type="term" value="P:glycerol-3-phosphate biosynthetic process"/>
    <property type="evidence" value="ECO:0007669"/>
    <property type="project" value="UniProtKB-UniRule"/>
</dbReference>
<dbReference type="GO" id="GO:0046168">
    <property type="term" value="P:glycerol-3-phosphate catabolic process"/>
    <property type="evidence" value="ECO:0007669"/>
    <property type="project" value="InterPro"/>
</dbReference>
<dbReference type="GO" id="GO:0046474">
    <property type="term" value="P:glycerophospholipid biosynthetic process"/>
    <property type="evidence" value="ECO:0007669"/>
    <property type="project" value="TreeGrafter"/>
</dbReference>
<dbReference type="FunFam" id="1.10.1040.10:FF:000001">
    <property type="entry name" value="Glycerol-3-phosphate dehydrogenase [NAD(P)+]"/>
    <property type="match status" value="1"/>
</dbReference>
<dbReference type="FunFam" id="3.40.50.720:FF:000019">
    <property type="entry name" value="Glycerol-3-phosphate dehydrogenase [NAD(P)+]"/>
    <property type="match status" value="1"/>
</dbReference>
<dbReference type="Gene3D" id="1.10.1040.10">
    <property type="entry name" value="N-(1-d-carboxylethyl)-l-norvaline Dehydrogenase, domain 2"/>
    <property type="match status" value="1"/>
</dbReference>
<dbReference type="Gene3D" id="3.40.50.720">
    <property type="entry name" value="NAD(P)-binding Rossmann-like Domain"/>
    <property type="match status" value="1"/>
</dbReference>
<dbReference type="HAMAP" id="MF_00394">
    <property type="entry name" value="NAD_Glyc3P_dehydrog"/>
    <property type="match status" value="1"/>
</dbReference>
<dbReference type="InterPro" id="IPR008927">
    <property type="entry name" value="6-PGluconate_DH-like_C_sf"/>
</dbReference>
<dbReference type="InterPro" id="IPR013328">
    <property type="entry name" value="6PGD_dom2"/>
</dbReference>
<dbReference type="InterPro" id="IPR006168">
    <property type="entry name" value="G3P_DH_NAD-dep"/>
</dbReference>
<dbReference type="InterPro" id="IPR006109">
    <property type="entry name" value="G3P_DH_NAD-dep_C"/>
</dbReference>
<dbReference type="InterPro" id="IPR011128">
    <property type="entry name" value="G3P_DH_NAD-dep_N"/>
</dbReference>
<dbReference type="InterPro" id="IPR036291">
    <property type="entry name" value="NAD(P)-bd_dom_sf"/>
</dbReference>
<dbReference type="NCBIfam" id="NF000939">
    <property type="entry name" value="PRK00094.1-1"/>
    <property type="match status" value="1"/>
</dbReference>
<dbReference type="NCBIfam" id="NF000940">
    <property type="entry name" value="PRK00094.1-2"/>
    <property type="match status" value="1"/>
</dbReference>
<dbReference type="NCBIfam" id="NF000942">
    <property type="entry name" value="PRK00094.1-4"/>
    <property type="match status" value="1"/>
</dbReference>
<dbReference type="PANTHER" id="PTHR11728">
    <property type="entry name" value="GLYCEROL-3-PHOSPHATE DEHYDROGENASE"/>
    <property type="match status" value="1"/>
</dbReference>
<dbReference type="PANTHER" id="PTHR11728:SF1">
    <property type="entry name" value="GLYCEROL-3-PHOSPHATE DEHYDROGENASE [NAD(+)] 2, CHLOROPLASTIC"/>
    <property type="match status" value="1"/>
</dbReference>
<dbReference type="Pfam" id="PF07479">
    <property type="entry name" value="NAD_Gly3P_dh_C"/>
    <property type="match status" value="1"/>
</dbReference>
<dbReference type="Pfam" id="PF01210">
    <property type="entry name" value="NAD_Gly3P_dh_N"/>
    <property type="match status" value="1"/>
</dbReference>
<dbReference type="PIRSF" id="PIRSF000114">
    <property type="entry name" value="Glycerol-3-P_dh"/>
    <property type="match status" value="1"/>
</dbReference>
<dbReference type="PRINTS" id="PR00077">
    <property type="entry name" value="GPDHDRGNASE"/>
</dbReference>
<dbReference type="SUPFAM" id="SSF48179">
    <property type="entry name" value="6-phosphogluconate dehydrogenase C-terminal domain-like"/>
    <property type="match status" value="1"/>
</dbReference>
<dbReference type="SUPFAM" id="SSF51735">
    <property type="entry name" value="NAD(P)-binding Rossmann-fold domains"/>
    <property type="match status" value="1"/>
</dbReference>
<dbReference type="PROSITE" id="PS00957">
    <property type="entry name" value="NAD_G3PDH"/>
    <property type="match status" value="1"/>
</dbReference>
<reference key="1">
    <citation type="submission" date="2007-09" db="EMBL/GenBank/DDBJ databases">
        <title>Complete sequence of chromosome of Serratia proteamaculans 568.</title>
        <authorList>
            <consortium name="US DOE Joint Genome Institute"/>
            <person name="Copeland A."/>
            <person name="Lucas S."/>
            <person name="Lapidus A."/>
            <person name="Barry K."/>
            <person name="Glavina del Rio T."/>
            <person name="Dalin E."/>
            <person name="Tice H."/>
            <person name="Pitluck S."/>
            <person name="Chain P."/>
            <person name="Malfatti S."/>
            <person name="Shin M."/>
            <person name="Vergez L."/>
            <person name="Schmutz J."/>
            <person name="Larimer F."/>
            <person name="Land M."/>
            <person name="Hauser L."/>
            <person name="Kyrpides N."/>
            <person name="Kim E."/>
            <person name="Taghavi S."/>
            <person name="Newman L."/>
            <person name="Vangronsveld J."/>
            <person name="van der Lelie D."/>
            <person name="Richardson P."/>
        </authorList>
    </citation>
    <scope>NUCLEOTIDE SEQUENCE [LARGE SCALE GENOMIC DNA]</scope>
    <source>
        <strain>568</strain>
    </source>
</reference>
<gene>
    <name evidence="1" type="primary">gpsA</name>
    <name type="ordered locus">Spro_4815</name>
</gene>
<sequence>MNTVNASMTVIGAGSYGTALAITLARNGHSVVLWGHNPEQIQKMQRDRCNQAFLPDVAFPDTLLLEADLARALAASRDVLVVVPSHVFGDVLRQLKPHLRPDARIVWATKGLEAETGRLLQDVAREALGEAIPLAVVSGPTFAKELAAGLPTAIALASTDAQFAEDLQQLLHCGKSFRVYSNPDFIGVQLGGAVKNVIAIGAGMSDGIGFGANARTALITRGLTEMTRLGSALGADPSTFMGMAGLGDLVLTCTDNQSRNRRFGIMLGQGKGVQEAQDSIGQVVEGYRNTKEVLALAQRYGVEMPITEQIYQVLYCHKNAREAALSLLGRTRKDEKHSA</sequence>
<keyword id="KW-0963">Cytoplasm</keyword>
<keyword id="KW-0444">Lipid biosynthesis</keyword>
<keyword id="KW-0443">Lipid metabolism</keyword>
<keyword id="KW-0520">NAD</keyword>
<keyword id="KW-0521">NADP</keyword>
<keyword id="KW-0547">Nucleotide-binding</keyword>
<keyword id="KW-0560">Oxidoreductase</keyword>
<keyword id="KW-0594">Phospholipid biosynthesis</keyword>
<keyword id="KW-1208">Phospholipid metabolism</keyword>
<organism>
    <name type="scientific">Serratia proteamaculans (strain 568)</name>
    <dbReference type="NCBI Taxonomy" id="399741"/>
    <lineage>
        <taxon>Bacteria</taxon>
        <taxon>Pseudomonadati</taxon>
        <taxon>Pseudomonadota</taxon>
        <taxon>Gammaproteobacteria</taxon>
        <taxon>Enterobacterales</taxon>
        <taxon>Yersiniaceae</taxon>
        <taxon>Serratia</taxon>
    </lineage>
</organism>
<evidence type="ECO:0000255" key="1">
    <source>
        <dbReference type="HAMAP-Rule" id="MF_00394"/>
    </source>
</evidence>
<comment type="function">
    <text evidence="1">Catalyzes the reduction of the glycolytic intermediate dihydroxyacetone phosphate (DHAP) to sn-glycerol 3-phosphate (G3P), the key precursor for phospholipid synthesis.</text>
</comment>
<comment type="catalytic activity">
    <reaction evidence="1">
        <text>sn-glycerol 3-phosphate + NAD(+) = dihydroxyacetone phosphate + NADH + H(+)</text>
        <dbReference type="Rhea" id="RHEA:11092"/>
        <dbReference type="ChEBI" id="CHEBI:15378"/>
        <dbReference type="ChEBI" id="CHEBI:57540"/>
        <dbReference type="ChEBI" id="CHEBI:57597"/>
        <dbReference type="ChEBI" id="CHEBI:57642"/>
        <dbReference type="ChEBI" id="CHEBI:57945"/>
        <dbReference type="EC" id="1.1.1.94"/>
    </reaction>
    <physiologicalReaction direction="right-to-left" evidence="1">
        <dbReference type="Rhea" id="RHEA:11094"/>
    </physiologicalReaction>
</comment>
<comment type="catalytic activity">
    <reaction evidence="1">
        <text>sn-glycerol 3-phosphate + NADP(+) = dihydroxyacetone phosphate + NADPH + H(+)</text>
        <dbReference type="Rhea" id="RHEA:11096"/>
        <dbReference type="ChEBI" id="CHEBI:15378"/>
        <dbReference type="ChEBI" id="CHEBI:57597"/>
        <dbReference type="ChEBI" id="CHEBI:57642"/>
        <dbReference type="ChEBI" id="CHEBI:57783"/>
        <dbReference type="ChEBI" id="CHEBI:58349"/>
        <dbReference type="EC" id="1.1.1.94"/>
    </reaction>
    <physiologicalReaction direction="right-to-left" evidence="1">
        <dbReference type="Rhea" id="RHEA:11098"/>
    </physiologicalReaction>
</comment>
<comment type="pathway">
    <text evidence="1">Membrane lipid metabolism; glycerophospholipid metabolism.</text>
</comment>
<comment type="subcellular location">
    <subcellularLocation>
        <location evidence="1">Cytoplasm</location>
    </subcellularLocation>
</comment>
<comment type="similarity">
    <text evidence="1">Belongs to the NAD-dependent glycerol-3-phosphate dehydrogenase family.</text>
</comment>
<protein>
    <recommendedName>
        <fullName evidence="1">Glycerol-3-phosphate dehydrogenase [NAD(P)+]</fullName>
        <ecNumber evidence="1">1.1.1.94</ecNumber>
    </recommendedName>
    <alternativeName>
        <fullName evidence="1">NAD(P)(+)-dependent glycerol-3-phosphate dehydrogenase</fullName>
    </alternativeName>
    <alternativeName>
        <fullName evidence="1">NAD(P)H-dependent dihydroxyacetone-phosphate reductase</fullName>
    </alternativeName>
</protein>
<feature type="chain" id="PRO_1000060789" description="Glycerol-3-phosphate dehydrogenase [NAD(P)+]">
    <location>
        <begin position="1"/>
        <end position="339"/>
    </location>
</feature>
<feature type="active site" description="Proton acceptor" evidence="1">
    <location>
        <position position="195"/>
    </location>
</feature>
<feature type="binding site" evidence="1">
    <location>
        <position position="15"/>
    </location>
    <ligand>
        <name>NADPH</name>
        <dbReference type="ChEBI" id="CHEBI:57783"/>
    </ligand>
</feature>
<feature type="binding site" evidence="1">
    <location>
        <position position="16"/>
    </location>
    <ligand>
        <name>NADPH</name>
        <dbReference type="ChEBI" id="CHEBI:57783"/>
    </ligand>
</feature>
<feature type="binding site" evidence="1">
    <location>
        <position position="36"/>
    </location>
    <ligand>
        <name>NADPH</name>
        <dbReference type="ChEBI" id="CHEBI:57783"/>
    </ligand>
</feature>
<feature type="binding site" evidence="1">
    <location>
        <position position="110"/>
    </location>
    <ligand>
        <name>NADPH</name>
        <dbReference type="ChEBI" id="CHEBI:57783"/>
    </ligand>
</feature>
<feature type="binding site" evidence="1">
    <location>
        <position position="110"/>
    </location>
    <ligand>
        <name>sn-glycerol 3-phosphate</name>
        <dbReference type="ChEBI" id="CHEBI:57597"/>
    </ligand>
</feature>
<feature type="binding site" evidence="1">
    <location>
        <position position="139"/>
    </location>
    <ligand>
        <name>sn-glycerol 3-phosphate</name>
        <dbReference type="ChEBI" id="CHEBI:57597"/>
    </ligand>
</feature>
<feature type="binding site" evidence="1">
    <location>
        <position position="141"/>
    </location>
    <ligand>
        <name>sn-glycerol 3-phosphate</name>
        <dbReference type="ChEBI" id="CHEBI:57597"/>
    </ligand>
</feature>
<feature type="binding site" evidence="1">
    <location>
        <position position="143"/>
    </location>
    <ligand>
        <name>NADPH</name>
        <dbReference type="ChEBI" id="CHEBI:57783"/>
    </ligand>
</feature>
<feature type="binding site" evidence="1">
    <location>
        <position position="195"/>
    </location>
    <ligand>
        <name>sn-glycerol 3-phosphate</name>
        <dbReference type="ChEBI" id="CHEBI:57597"/>
    </ligand>
</feature>
<feature type="binding site" evidence="1">
    <location>
        <position position="248"/>
    </location>
    <ligand>
        <name>sn-glycerol 3-phosphate</name>
        <dbReference type="ChEBI" id="CHEBI:57597"/>
    </ligand>
</feature>
<feature type="binding site" evidence="1">
    <location>
        <position position="258"/>
    </location>
    <ligand>
        <name>sn-glycerol 3-phosphate</name>
        <dbReference type="ChEBI" id="CHEBI:57597"/>
    </ligand>
</feature>
<feature type="binding site" evidence="1">
    <location>
        <position position="259"/>
    </location>
    <ligand>
        <name>NADPH</name>
        <dbReference type="ChEBI" id="CHEBI:57783"/>
    </ligand>
</feature>
<feature type="binding site" evidence="1">
    <location>
        <position position="259"/>
    </location>
    <ligand>
        <name>sn-glycerol 3-phosphate</name>
        <dbReference type="ChEBI" id="CHEBI:57597"/>
    </ligand>
</feature>
<feature type="binding site" evidence="1">
    <location>
        <position position="260"/>
    </location>
    <ligand>
        <name>sn-glycerol 3-phosphate</name>
        <dbReference type="ChEBI" id="CHEBI:57597"/>
    </ligand>
</feature>
<feature type="binding site" evidence="1">
    <location>
        <position position="283"/>
    </location>
    <ligand>
        <name>NADPH</name>
        <dbReference type="ChEBI" id="CHEBI:57783"/>
    </ligand>
</feature>
<feature type="binding site" evidence="1">
    <location>
        <position position="285"/>
    </location>
    <ligand>
        <name>NADPH</name>
        <dbReference type="ChEBI" id="CHEBI:57783"/>
    </ligand>
</feature>